<gene>
    <name evidence="10" type="primary">FBA1</name>
    <name type="ordered locus">At2g21330</name>
    <name type="ORF">F3K23.9</name>
</gene>
<keyword id="KW-0025">Alternative splicing</keyword>
<keyword id="KW-0150">Chloroplast</keyword>
<keyword id="KW-0903">Direct protein sequencing</keyword>
<keyword id="KW-0318">Glutathionylation</keyword>
<keyword id="KW-0324">Glycolysis</keyword>
<keyword id="KW-0456">Lyase</keyword>
<keyword id="KW-0488">Methylation</keyword>
<keyword id="KW-0597">Phosphoprotein</keyword>
<keyword id="KW-0934">Plastid</keyword>
<keyword id="KW-1185">Reference proteome</keyword>
<keyword id="KW-0704">Schiff base</keyword>
<keyword id="KW-0809">Transit peptide</keyword>
<organism>
    <name type="scientific">Arabidopsis thaliana</name>
    <name type="common">Mouse-ear cress</name>
    <dbReference type="NCBI Taxonomy" id="3702"/>
    <lineage>
        <taxon>Eukaryota</taxon>
        <taxon>Viridiplantae</taxon>
        <taxon>Streptophyta</taxon>
        <taxon>Embryophyta</taxon>
        <taxon>Tracheophyta</taxon>
        <taxon>Spermatophyta</taxon>
        <taxon>Magnoliopsida</taxon>
        <taxon>eudicotyledons</taxon>
        <taxon>Gunneridae</taxon>
        <taxon>Pentapetalae</taxon>
        <taxon>rosids</taxon>
        <taxon>malvids</taxon>
        <taxon>Brassicales</taxon>
        <taxon>Brassicaceae</taxon>
        <taxon>Camelineae</taxon>
        <taxon>Arabidopsis</taxon>
    </lineage>
</organism>
<protein>
    <recommendedName>
        <fullName evidence="11">Fructose-bisphosphate aldolase 1, chloroplastic</fullName>
        <shortName evidence="10">AtFBA1</shortName>
        <ecNumber evidence="11">4.1.2.13</ecNumber>
    </recommendedName>
</protein>
<comment type="function">
    <text evidence="3">Plays a key role in glycolysis and gluconeogenesis.</text>
</comment>
<comment type="catalytic activity">
    <reaction evidence="3">
        <text>beta-D-fructose 1,6-bisphosphate = D-glyceraldehyde 3-phosphate + dihydroxyacetone phosphate</text>
        <dbReference type="Rhea" id="RHEA:14729"/>
        <dbReference type="ChEBI" id="CHEBI:32966"/>
        <dbReference type="ChEBI" id="CHEBI:57642"/>
        <dbReference type="ChEBI" id="CHEBI:59776"/>
        <dbReference type="EC" id="4.1.2.13"/>
    </reaction>
</comment>
<comment type="pathway">
    <text evidence="11">Carbohydrate degradation; glycolysis; D-glyceraldehyde 3-phosphate and glycerone phosphate from D-glucose: step 4/4.</text>
</comment>
<comment type="subunit">
    <text evidence="2">Homotetramer.</text>
</comment>
<comment type="subcellular location">
    <subcellularLocation>
        <location evidence="4 6 7">Plastid</location>
        <location evidence="4 6 7">Chloroplast</location>
        <location evidence="4 6 7">Plastoglobule</location>
    </subcellularLocation>
    <subcellularLocation>
        <location evidence="6">Plastid</location>
        <location evidence="6">Chloroplast stroma</location>
    </subcellularLocation>
</comment>
<comment type="alternative products">
    <event type="alternative splicing"/>
    <isoform>
        <id>Q9SJU4-1</id>
        <name>1</name>
        <sequence type="displayed"/>
    </isoform>
    <text>A number of isoforms are produced. According to EST sequences.</text>
</comment>
<comment type="tissue specificity">
    <text evidence="9">Highly expressed in rosettes leaves and cauline leaves.</text>
</comment>
<comment type="induction">
    <text evidence="9">By sucrose (PubMed:22561114). Induced by drought stress (PubMed:22561114).</text>
</comment>
<comment type="PTM">
    <text evidence="8">Can be trimethylated at Lys-395 by LSMT-L, but the trimethylation has no effect in vitro on the kinetic properties of the enzyme.</text>
</comment>
<comment type="PTM">
    <text evidence="5">S-glutathionylated.</text>
</comment>
<comment type="similarity">
    <text evidence="11">Belongs to the class I fructose-bisphosphate aldolase family.</text>
</comment>
<evidence type="ECO:0000250" key="1">
    <source>
        <dbReference type="UniProtKB" id="P00883"/>
    </source>
</evidence>
<evidence type="ECO:0000250" key="2">
    <source>
        <dbReference type="UniProtKB" id="Q944G9"/>
    </source>
</evidence>
<evidence type="ECO:0000250" key="3">
    <source>
        <dbReference type="UniProtKB" id="Q9SJQ9"/>
    </source>
</evidence>
<evidence type="ECO:0000269" key="4">
    <source>
    </source>
</evidence>
<evidence type="ECO:0000269" key="5">
    <source>
    </source>
</evidence>
<evidence type="ECO:0000269" key="6">
    <source>
    </source>
</evidence>
<evidence type="ECO:0000269" key="7">
    <source>
    </source>
</evidence>
<evidence type="ECO:0000269" key="8">
    <source>
    </source>
</evidence>
<evidence type="ECO:0000269" key="9">
    <source>
    </source>
</evidence>
<evidence type="ECO:0000303" key="10">
    <source>
    </source>
</evidence>
<evidence type="ECO:0000305" key="11"/>
<sequence length="399" mass="42931">MASSTATMLKASPVKSDWVKGQSLLLRQPSSVSAIRSHVAPSALTVRAASAYADELVKTAKTIASPGHGIMAMDESNATCGKRLASIGLENTEANRQAYRTLLVSAPGLGQYISGAILFEETLYQSTTDGKKMVDVLVEQNIVPGIKVDKGLVPLVGSYDESWCQGLDGLASRTAAYYQQGARFAKWRTVVSIPNGPSALAVKEAAWGLARYAAISQDSGLVPIVEPEIMLDGEHGIDRTYDVAEKVWAEVFFYLAQNNVMFEGILLKPSMVTPGAEATDRATPEQVASYTLKLLRNRIPPAVPGIMFLSGGQSELEATLNLNAMNQAPNPWHVSFSYARALQNTCLKTWGGKEENVKAAQDILLARAKANSLAQLGKYTGEGESEEAKEGMFVKGYTY</sequence>
<name>ALFP1_ARATH</name>
<dbReference type="EC" id="4.1.2.13" evidence="11"/>
<dbReference type="EMBL" id="AC006841">
    <property type="protein sequence ID" value="AAD23681.2"/>
    <property type="molecule type" value="Genomic_DNA"/>
</dbReference>
<dbReference type="EMBL" id="CP002685">
    <property type="protein sequence ID" value="AEC07160.1"/>
    <property type="molecule type" value="Genomic_DNA"/>
</dbReference>
<dbReference type="EMBL" id="AF419589">
    <property type="protein sequence ID" value="AAL31921.1"/>
    <property type="molecule type" value="mRNA"/>
</dbReference>
<dbReference type="EMBL" id="AF428408">
    <property type="protein sequence ID" value="AAL16176.1"/>
    <property type="molecule type" value="mRNA"/>
</dbReference>
<dbReference type="EMBL" id="AY035043">
    <property type="protein sequence ID" value="AAK59548.1"/>
    <property type="molecule type" value="mRNA"/>
</dbReference>
<dbReference type="EMBL" id="AY049282">
    <property type="protein sequence ID" value="AAK83624.1"/>
    <property type="molecule type" value="mRNA"/>
</dbReference>
<dbReference type="EMBL" id="AY049286">
    <property type="protein sequence ID" value="AAK83628.1"/>
    <property type="molecule type" value="mRNA"/>
</dbReference>
<dbReference type="EMBL" id="AY062582">
    <property type="protein sequence ID" value="AAL32660.1"/>
    <property type="molecule type" value="mRNA"/>
</dbReference>
<dbReference type="EMBL" id="AY090291">
    <property type="protein sequence ID" value="AAL90952.1"/>
    <property type="molecule type" value="mRNA"/>
</dbReference>
<dbReference type="EMBL" id="AY128380">
    <property type="protein sequence ID" value="AAM91583.1"/>
    <property type="molecule type" value="mRNA"/>
</dbReference>
<dbReference type="EMBL" id="AY128784">
    <property type="protein sequence ID" value="AAM91184.1"/>
    <property type="molecule type" value="mRNA"/>
</dbReference>
<dbReference type="EMBL" id="AY142633">
    <property type="protein sequence ID" value="AAN13091.1"/>
    <property type="molecule type" value="mRNA"/>
</dbReference>
<dbReference type="EMBL" id="BT000106">
    <property type="protein sequence ID" value="AAN15425.1"/>
    <property type="molecule type" value="mRNA"/>
</dbReference>
<dbReference type="EMBL" id="BT002415">
    <property type="protein sequence ID" value="AAO00775.1"/>
    <property type="molecule type" value="mRNA"/>
</dbReference>
<dbReference type="PIR" id="A84600">
    <property type="entry name" value="A84600"/>
</dbReference>
<dbReference type="RefSeq" id="NP_565508.1">
    <molecule id="Q9SJU4-1"/>
    <property type="nucleotide sequence ID" value="NM_127705.4"/>
</dbReference>
<dbReference type="SMR" id="Q9SJU4"/>
<dbReference type="BioGRID" id="2025">
    <property type="interactions" value="3"/>
</dbReference>
<dbReference type="FunCoup" id="Q9SJU4">
    <property type="interactions" value="1142"/>
</dbReference>
<dbReference type="STRING" id="3702.Q9SJU4"/>
<dbReference type="GlyGen" id="Q9SJU4">
    <property type="glycosylation" value="1 site"/>
</dbReference>
<dbReference type="iPTMnet" id="Q9SJU4"/>
<dbReference type="PaxDb" id="3702-AT2G21330.1"/>
<dbReference type="ProteomicsDB" id="245045">
    <molecule id="Q9SJU4-1"/>
</dbReference>
<dbReference type="EnsemblPlants" id="AT2G21330.1">
    <molecule id="Q9SJU4-1"/>
    <property type="protein sequence ID" value="AT2G21330.1"/>
    <property type="gene ID" value="AT2G21330"/>
</dbReference>
<dbReference type="GeneID" id="816672"/>
<dbReference type="Gramene" id="AT2G21330.1">
    <molecule id="Q9SJU4-1"/>
    <property type="protein sequence ID" value="AT2G21330.1"/>
    <property type="gene ID" value="AT2G21330"/>
</dbReference>
<dbReference type="KEGG" id="ath:AT2G21330"/>
<dbReference type="Araport" id="AT2G21330"/>
<dbReference type="TAIR" id="AT2G21330">
    <property type="gene designation" value="FBA1"/>
</dbReference>
<dbReference type="eggNOG" id="KOG1557">
    <property type="taxonomic scope" value="Eukaryota"/>
</dbReference>
<dbReference type="HOGENOM" id="CLU_031243_0_0_1"/>
<dbReference type="InParanoid" id="Q9SJU4"/>
<dbReference type="OMA" id="PNPWHIS"/>
<dbReference type="OrthoDB" id="36455at2759"/>
<dbReference type="PhylomeDB" id="Q9SJU4"/>
<dbReference type="BioCyc" id="ARA:AT2G21330-MONOMER"/>
<dbReference type="UniPathway" id="UPA00109">
    <property type="reaction ID" value="UER00183"/>
</dbReference>
<dbReference type="CD-CODE" id="4299E36E">
    <property type="entry name" value="Nucleolus"/>
</dbReference>
<dbReference type="PRO" id="PR:Q9SJU4"/>
<dbReference type="Proteomes" id="UP000006548">
    <property type="component" value="Chromosome 2"/>
</dbReference>
<dbReference type="ExpressionAtlas" id="Q9SJU4">
    <property type="expression patterns" value="baseline and differential"/>
</dbReference>
<dbReference type="GO" id="GO:0048046">
    <property type="term" value="C:apoplast"/>
    <property type="evidence" value="ECO:0007005"/>
    <property type="project" value="TAIR"/>
</dbReference>
<dbReference type="GO" id="GO:0009507">
    <property type="term" value="C:chloroplast"/>
    <property type="evidence" value="ECO:0000314"/>
    <property type="project" value="TAIR"/>
</dbReference>
<dbReference type="GO" id="GO:0009941">
    <property type="term" value="C:chloroplast envelope"/>
    <property type="evidence" value="ECO:0007005"/>
    <property type="project" value="TAIR"/>
</dbReference>
<dbReference type="GO" id="GO:0009570">
    <property type="term" value="C:chloroplast stroma"/>
    <property type="evidence" value="ECO:0007005"/>
    <property type="project" value="TAIR"/>
</dbReference>
<dbReference type="GO" id="GO:0009534">
    <property type="term" value="C:chloroplast thylakoid"/>
    <property type="evidence" value="ECO:0007005"/>
    <property type="project" value="TAIR"/>
</dbReference>
<dbReference type="GO" id="GO:0022626">
    <property type="term" value="C:cytosolic ribosome"/>
    <property type="evidence" value="ECO:0007005"/>
    <property type="project" value="TAIR"/>
</dbReference>
<dbReference type="GO" id="GO:0005739">
    <property type="term" value="C:mitochondrion"/>
    <property type="evidence" value="ECO:0000314"/>
    <property type="project" value="TAIR"/>
</dbReference>
<dbReference type="GO" id="GO:0010287">
    <property type="term" value="C:plastoglobule"/>
    <property type="evidence" value="ECO:0007005"/>
    <property type="project" value="TAIR"/>
</dbReference>
<dbReference type="GO" id="GO:0009579">
    <property type="term" value="C:thylakoid"/>
    <property type="evidence" value="ECO:0007005"/>
    <property type="project" value="TAIR"/>
</dbReference>
<dbReference type="GO" id="GO:0031977">
    <property type="term" value="C:thylakoid lumen"/>
    <property type="evidence" value="ECO:0007005"/>
    <property type="project" value="TAIR"/>
</dbReference>
<dbReference type="GO" id="GO:0004332">
    <property type="term" value="F:fructose-bisphosphate aldolase activity"/>
    <property type="evidence" value="ECO:0000250"/>
    <property type="project" value="UniProtKB"/>
</dbReference>
<dbReference type="GO" id="GO:0006094">
    <property type="term" value="P:gluconeogenesis"/>
    <property type="evidence" value="ECO:0000250"/>
    <property type="project" value="UniProtKB"/>
</dbReference>
<dbReference type="GO" id="GO:0006096">
    <property type="term" value="P:glycolytic process"/>
    <property type="evidence" value="ECO:0000250"/>
    <property type="project" value="UniProtKB"/>
</dbReference>
<dbReference type="CDD" id="cd00948">
    <property type="entry name" value="FBP_aldolase_I_a"/>
    <property type="match status" value="1"/>
</dbReference>
<dbReference type="FunFam" id="3.20.20.70:FF:000052">
    <property type="entry name" value="Fructose-bisphosphate aldolase"/>
    <property type="match status" value="1"/>
</dbReference>
<dbReference type="Gene3D" id="3.20.20.70">
    <property type="entry name" value="Aldolase class I"/>
    <property type="match status" value="1"/>
</dbReference>
<dbReference type="InterPro" id="IPR029768">
    <property type="entry name" value="Aldolase_I_AS"/>
</dbReference>
<dbReference type="InterPro" id="IPR013785">
    <property type="entry name" value="Aldolase_TIM"/>
</dbReference>
<dbReference type="InterPro" id="IPR000741">
    <property type="entry name" value="FBA_I"/>
</dbReference>
<dbReference type="NCBIfam" id="NF033379">
    <property type="entry name" value="FrucBisAld_I"/>
    <property type="match status" value="1"/>
</dbReference>
<dbReference type="PANTHER" id="PTHR11627">
    <property type="entry name" value="FRUCTOSE-BISPHOSPHATE ALDOLASE"/>
    <property type="match status" value="1"/>
</dbReference>
<dbReference type="Pfam" id="PF00274">
    <property type="entry name" value="Glycolytic"/>
    <property type="match status" value="1"/>
</dbReference>
<dbReference type="SUPFAM" id="SSF51569">
    <property type="entry name" value="Aldolase"/>
    <property type="match status" value="1"/>
</dbReference>
<dbReference type="PROSITE" id="PS00158">
    <property type="entry name" value="ALDOLASE_CLASS_I"/>
    <property type="match status" value="1"/>
</dbReference>
<accession>Q9SJU4</accession>
<accession>Q2V473</accession>
<accession>Q93WF5</accession>
<accession>Q94C97</accession>
<feature type="transit peptide" description="Chloroplast" evidence="4">
    <location>
        <begin position="1"/>
        <end position="48"/>
    </location>
</feature>
<feature type="chain" id="PRO_0000286526" description="Fructose-bisphosphate aldolase 1, chloroplastic">
    <location>
        <begin position="49"/>
        <end position="399"/>
    </location>
</feature>
<feature type="active site" description="Proton acceptor" evidence="1">
    <location>
        <position position="226"/>
    </location>
</feature>
<feature type="active site" description="Schiff-base intermediate with dihydroxyacetone-P" evidence="1">
    <location>
        <position position="268"/>
    </location>
</feature>
<feature type="binding site" evidence="1">
    <location>
        <position position="96"/>
    </location>
    <ligand>
        <name>substrate</name>
    </ligand>
</feature>
<feature type="binding site" evidence="1">
    <location>
        <position position="186"/>
    </location>
    <ligand>
        <name>substrate</name>
    </ligand>
</feature>
<feature type="binding site" evidence="1">
    <location>
        <begin position="310"/>
        <end position="312"/>
    </location>
    <ligand>
        <name>substrate</name>
    </ligand>
</feature>
<feature type="site" description="Necessary for preference for fructose 1,6-bisphosphate over fructose 1-phosphate" evidence="1">
    <location>
        <position position="399"/>
    </location>
</feature>
<feature type="modified residue" description="Phosphoserine" evidence="2">
    <location>
        <position position="158"/>
    </location>
</feature>
<feature type="modified residue" description="Phosphoserine" evidence="2">
    <location>
        <position position="216"/>
    </location>
</feature>
<feature type="modified residue" description="N6,N6,N6-trimethyllysine" evidence="8">
    <location>
        <position position="395"/>
    </location>
</feature>
<feature type="sequence conflict" description="In Ref. 3; AAK59548." evidence="11" ref="3">
    <original>G</original>
    <variation>S</variation>
    <location>
        <position position="236"/>
    </location>
</feature>
<feature type="sequence conflict" description="In Ref. 3; AAK59548." evidence="11" ref="3">
    <original>E</original>
    <variation>G</variation>
    <location>
        <position position="315"/>
    </location>
</feature>
<proteinExistence type="evidence at protein level"/>
<reference key="1">
    <citation type="journal article" date="1999" name="Nature">
        <title>Sequence and analysis of chromosome 2 of the plant Arabidopsis thaliana.</title>
        <authorList>
            <person name="Lin X."/>
            <person name="Kaul S."/>
            <person name="Rounsley S.D."/>
            <person name="Shea T.P."/>
            <person name="Benito M.-I."/>
            <person name="Town C.D."/>
            <person name="Fujii C.Y."/>
            <person name="Mason T.M."/>
            <person name="Bowman C.L."/>
            <person name="Barnstead M.E."/>
            <person name="Feldblyum T.V."/>
            <person name="Buell C.R."/>
            <person name="Ketchum K.A."/>
            <person name="Lee J.J."/>
            <person name="Ronning C.M."/>
            <person name="Koo H.L."/>
            <person name="Moffat K.S."/>
            <person name="Cronin L.A."/>
            <person name="Shen M."/>
            <person name="Pai G."/>
            <person name="Van Aken S."/>
            <person name="Umayam L."/>
            <person name="Tallon L.J."/>
            <person name="Gill J.E."/>
            <person name="Adams M.D."/>
            <person name="Carrera A.J."/>
            <person name="Creasy T.H."/>
            <person name="Goodman H.M."/>
            <person name="Somerville C.R."/>
            <person name="Copenhaver G.P."/>
            <person name="Preuss D."/>
            <person name="Nierman W.C."/>
            <person name="White O."/>
            <person name="Eisen J.A."/>
            <person name="Salzberg S.L."/>
            <person name="Fraser C.M."/>
            <person name="Venter J.C."/>
        </authorList>
    </citation>
    <scope>NUCLEOTIDE SEQUENCE [LARGE SCALE GENOMIC DNA]</scope>
    <source>
        <strain>cv. Columbia</strain>
    </source>
</reference>
<reference key="2">
    <citation type="journal article" date="2017" name="Plant J.">
        <title>Araport11: a complete reannotation of the Arabidopsis thaliana reference genome.</title>
        <authorList>
            <person name="Cheng C.Y."/>
            <person name="Krishnakumar V."/>
            <person name="Chan A.P."/>
            <person name="Thibaud-Nissen F."/>
            <person name="Schobel S."/>
            <person name="Town C.D."/>
        </authorList>
    </citation>
    <scope>GENOME REANNOTATION</scope>
    <source>
        <strain>cv. Columbia</strain>
    </source>
</reference>
<reference key="3">
    <citation type="journal article" date="2003" name="Science">
        <title>Empirical analysis of transcriptional activity in the Arabidopsis genome.</title>
        <authorList>
            <person name="Yamada K."/>
            <person name="Lim J."/>
            <person name="Dale J.M."/>
            <person name="Chen H."/>
            <person name="Shinn P."/>
            <person name="Palm C.J."/>
            <person name="Southwick A.M."/>
            <person name="Wu H.C."/>
            <person name="Kim C.J."/>
            <person name="Nguyen M."/>
            <person name="Pham P.K."/>
            <person name="Cheuk R.F."/>
            <person name="Karlin-Newmann G."/>
            <person name="Liu S.X."/>
            <person name="Lam B."/>
            <person name="Sakano H."/>
            <person name="Wu T."/>
            <person name="Yu G."/>
            <person name="Miranda M."/>
            <person name="Quach H.L."/>
            <person name="Tripp M."/>
            <person name="Chang C.H."/>
            <person name="Lee J.M."/>
            <person name="Toriumi M.J."/>
            <person name="Chan M.M."/>
            <person name="Tang C.C."/>
            <person name="Onodera C.S."/>
            <person name="Deng J.M."/>
            <person name="Akiyama K."/>
            <person name="Ansari Y."/>
            <person name="Arakawa T."/>
            <person name="Banh J."/>
            <person name="Banno F."/>
            <person name="Bowser L."/>
            <person name="Brooks S.Y."/>
            <person name="Carninci P."/>
            <person name="Chao Q."/>
            <person name="Choy N."/>
            <person name="Enju A."/>
            <person name="Goldsmith A.D."/>
            <person name="Gurjal M."/>
            <person name="Hansen N.F."/>
            <person name="Hayashizaki Y."/>
            <person name="Johnson-Hopson C."/>
            <person name="Hsuan V.W."/>
            <person name="Iida K."/>
            <person name="Karnes M."/>
            <person name="Khan S."/>
            <person name="Koesema E."/>
            <person name="Ishida J."/>
            <person name="Jiang P.X."/>
            <person name="Jones T."/>
            <person name="Kawai J."/>
            <person name="Kamiya A."/>
            <person name="Meyers C."/>
            <person name="Nakajima M."/>
            <person name="Narusaka M."/>
            <person name="Seki M."/>
            <person name="Sakurai T."/>
            <person name="Satou M."/>
            <person name="Tamse R."/>
            <person name="Vaysberg M."/>
            <person name="Wallender E.K."/>
            <person name="Wong C."/>
            <person name="Yamamura Y."/>
            <person name="Yuan S."/>
            <person name="Shinozaki K."/>
            <person name="Davis R.W."/>
            <person name="Theologis A."/>
            <person name="Ecker J.R."/>
        </authorList>
    </citation>
    <scope>NUCLEOTIDE SEQUENCE [LARGE SCALE MRNA]</scope>
    <source>
        <strain>cv. Columbia</strain>
    </source>
</reference>
<reference key="4">
    <citation type="journal article" date="2002" name="J. Biol. Chem.">
        <title>Proteome map of the chloroplast lumen of Arabidopsis thaliana.</title>
        <authorList>
            <person name="Schubert M."/>
            <person name="Petersson U.A."/>
            <person name="Haas B.J."/>
            <person name="Funk C."/>
            <person name="Schroeder W.P."/>
            <person name="Kieselbach T."/>
        </authorList>
    </citation>
    <scope>PROTEIN SEQUENCE OF 49-60</scope>
    <scope>SUBCELLULAR LOCATION</scope>
</reference>
<reference key="5">
    <citation type="journal article" date="2005" name="Plant Physiol.">
        <title>Proteomic identification of S-nitrosylated proteins in Arabidopsis.</title>
        <authorList>
            <person name="Lindermayr C."/>
            <person name="Saalbach G."/>
            <person name="Durner J."/>
        </authorList>
    </citation>
    <scope>IDENTIFICATION BY MASS SPECTROMETRY</scope>
    <scope>GLUTATHIONYLATION</scope>
</reference>
<reference key="6">
    <citation type="journal article" date="2006" name="J. Biol. Chem.">
        <title>Tocopherol cyclase (VTE1) localization and vitamin E accumulation in chloroplast plastoglobule lipoprotein particles.</title>
        <authorList>
            <person name="Vidi P.-A."/>
            <person name="Kanwischer M."/>
            <person name="Baginsky S."/>
            <person name="Austin J.R."/>
            <person name="Csucs G."/>
            <person name="Doermann P."/>
            <person name="Kessler F."/>
            <person name="Brehelin C."/>
        </authorList>
    </citation>
    <scope>SUBCELLULAR LOCATION</scope>
    <source>
        <strain>cv. Col-2</strain>
    </source>
</reference>
<reference key="7">
    <citation type="journal article" date="2006" name="Plant Physiol.">
        <title>Protein profiling of plastoglobules in chloroplasts and chromoplasts. A surprising site for differential accumulation of metabolic enzymes.</title>
        <authorList>
            <person name="Ytterberg A.J."/>
            <person name="Peltier J.-B."/>
            <person name="van Wijk K.J."/>
        </authorList>
    </citation>
    <scope>IDENTIFICATION BY MASS SPECTROMETRY</scope>
    <scope>SUBCELLULAR LOCATION [LARGE SCALE ANALYSIS]</scope>
    <source>
        <strain>cv. Columbia</strain>
    </source>
</reference>
<reference key="8">
    <citation type="journal article" date="2012" name="Gene">
        <title>Identification and characterization of fructose 1,6-bisphosphate aldolase genes in Arabidopsis reveal a gene family with diverse responses to abiotic stresses.</title>
        <authorList>
            <person name="Lu W."/>
            <person name="Tang X."/>
            <person name="Huo Y."/>
            <person name="Xu R."/>
            <person name="Qi S."/>
            <person name="Huang J."/>
            <person name="Zheng C."/>
            <person name="Wu C.A."/>
        </authorList>
    </citation>
    <scope>TISSUE SPECIFICITY</scope>
    <scope>INDUCTION</scope>
    <scope>GENE FAMILY</scope>
    <scope>NOMENCLATURE</scope>
</reference>
<reference key="9">
    <citation type="journal article" date="2012" name="J. Biol. Chem.">
        <title>Characterization of chloroplastic fructose 1,6-bisphosphate aldolases as lysine-methylated proteins in plants.</title>
        <authorList>
            <person name="Mininno M."/>
            <person name="Brugiere S."/>
            <person name="Pautre V."/>
            <person name="Gilgen A."/>
            <person name="Ma S."/>
            <person name="Ferro M."/>
            <person name="Tardif M."/>
            <person name="Alban C."/>
            <person name="Ravanel S."/>
        </authorList>
    </citation>
    <scope>METHYLATION AT LYS-395</scope>
</reference>